<organism>
    <name type="scientific">Elizabethkingia meningoseptica</name>
    <name type="common">Chryseobacterium meningosepticum</name>
    <dbReference type="NCBI Taxonomy" id="238"/>
    <lineage>
        <taxon>Bacteria</taxon>
        <taxon>Pseudomonadati</taxon>
        <taxon>Bacteroidota</taxon>
        <taxon>Flavobacteriia</taxon>
        <taxon>Flavobacteriales</taxon>
        <taxon>Weeksellaceae</taxon>
        <taxon>Elizabethkingia</taxon>
    </lineage>
</organism>
<proteinExistence type="inferred from homology"/>
<comment type="function">
    <text evidence="1">Confers resistance to the different beta-lactams antibiotics (penicillin, cephalosporin and carbapenem) via the hydrolysis of the beta-lactam ring.</text>
</comment>
<comment type="catalytic activity">
    <reaction evidence="1">
        <text>a beta-lactam + H2O = a substituted beta-amino acid</text>
        <dbReference type="Rhea" id="RHEA:20401"/>
        <dbReference type="ChEBI" id="CHEBI:15377"/>
        <dbReference type="ChEBI" id="CHEBI:35627"/>
        <dbReference type="ChEBI" id="CHEBI:140347"/>
        <dbReference type="EC" id="3.5.2.6"/>
    </reaction>
</comment>
<comment type="cofactor">
    <cofactor evidence="1">
        <name>Zn(2+)</name>
        <dbReference type="ChEBI" id="CHEBI:29105"/>
    </cofactor>
    <text evidence="1">Binds 2 Zn(2+) ions per subunit.</text>
</comment>
<comment type="subunit">
    <text evidence="1">Monomer.</text>
</comment>
<comment type="subcellular location">
    <subcellularLocation>
        <location evidence="3">Periplasm</location>
    </subcellularLocation>
</comment>
<comment type="similarity">
    <text evidence="3">Belongs to the metallo-beta-lactamase superfamily. Class-B beta-lactamase family.</text>
</comment>
<feature type="signal peptide" evidence="1 2">
    <location>
        <begin position="1"/>
        <end position="22"/>
    </location>
</feature>
<feature type="chain" id="PRO_0000016951" description="Metallo-beta-lactamase type 2">
    <location>
        <begin position="23"/>
        <end position="249"/>
    </location>
</feature>
<feature type="binding site" evidence="1">
    <location>
        <position position="98"/>
    </location>
    <ligand>
        <name>Zn(2+)</name>
        <dbReference type="ChEBI" id="CHEBI:29105"/>
        <label>1</label>
    </ligand>
</feature>
<feature type="binding site" evidence="1">
    <location>
        <position position="100"/>
    </location>
    <ligand>
        <name>Zn(2+)</name>
        <dbReference type="ChEBI" id="CHEBI:29105"/>
        <label>1</label>
    </ligand>
</feature>
<feature type="binding site" evidence="1">
    <location>
        <position position="102"/>
    </location>
    <ligand>
        <name>Zn(2+)</name>
        <dbReference type="ChEBI" id="CHEBI:29105"/>
        <label>2</label>
    </ligand>
</feature>
<feature type="binding site" evidence="1">
    <location>
        <position position="161"/>
    </location>
    <ligand>
        <name>Zn(2+)</name>
        <dbReference type="ChEBI" id="CHEBI:29105"/>
        <label>1</label>
    </ligand>
</feature>
<feature type="binding site" evidence="1">
    <location>
        <position position="180"/>
    </location>
    <ligand>
        <name>Zn(2+)</name>
        <dbReference type="ChEBI" id="CHEBI:29105"/>
        <label>2</label>
    </ligand>
</feature>
<feature type="binding site" evidence="1">
    <location>
        <position position="183"/>
    </location>
    <ligand>
        <name>substrate</name>
    </ligand>
</feature>
<feature type="binding site" evidence="1">
    <location>
        <position position="222"/>
    </location>
    <ligand>
        <name>Zn(2+)</name>
        <dbReference type="ChEBI" id="CHEBI:29105"/>
        <label>2</label>
    </ligand>
</feature>
<protein>
    <recommendedName>
        <fullName evidence="3">Metallo-beta-lactamase type 2</fullName>
        <ecNumber evidence="1">3.5.2.6</ecNumber>
    </recommendedName>
    <alternativeName>
        <fullName evidence="1">B2 metallo-beta-lactamase</fullName>
    </alternativeName>
    <alternativeName>
        <fullName evidence="1">Beta-lactamase type II</fullName>
    </alternativeName>
    <alternativeName>
        <fullName evidence="1">Carbapenem-hydrolyzing beta-lactamase BlaB-3</fullName>
        <shortName evidence="1">CHbetaL-3</shortName>
    </alternativeName>
    <alternativeName>
        <fullName evidence="1">Class B carbapenemase BlaB-3</fullName>
    </alternativeName>
    <alternativeName>
        <fullName evidence="1">Metallo-beta-lactamase type II</fullName>
    </alternativeName>
</protein>
<evidence type="ECO:0000250" key="1">
    <source>
        <dbReference type="UniProtKB" id="O08498"/>
    </source>
</evidence>
<evidence type="ECO:0000255" key="2"/>
<evidence type="ECO:0000305" key="3"/>
<sequence>MLKKIKISLILALGLTSLQAFGQENPDVKIEKLKDNLYVYTTYNTFNGTKYAANAVYLVTDKGVVVIDCPWGEDKFKSFTDEIYKKHGKKVIINIATHSHDDRAGGLEYFGKIGAKTYSTKMTDSILAKENKPRAQYTFDNNKSFKVGKSEFQVYYPGKGHTADNVVVWFPKEKVLVGGCIIKSADSKDLGYIGEAYVNDWTQSVHNIQQKFSGAQYVVAGHDDWKDQTSIQHTLDLISEYQQKQKASN</sequence>
<reference key="1">
    <citation type="journal article" date="2000" name="Antimicrob. Agents Chemother.">
        <title>Molecular and biochemical heterogeneity of class B carbapenem-hydrolyzing beta-lactamases in Chryseobacterium meningosepticum.</title>
        <authorList>
            <person name="Bellais S."/>
            <person name="Aubert D."/>
            <person name="Naas T."/>
            <person name="Nordmann P."/>
        </authorList>
    </citation>
    <scope>NUCLEOTIDE SEQUENCE [GENOMIC DNA]</scope>
    <source>
        <strain>ATCC 13255 / CIP 6059 / CCUG 4321 / LMG 12873 / NCTC 10586</strain>
        <strain>GEO</strain>
    </source>
</reference>
<name>BLAB3_ELIME</name>
<accession>Q9K303</accession>
<gene>
    <name type="primary">blaB3</name>
    <name evidence="1" type="synonym">blaB</name>
</gene>
<dbReference type="EC" id="3.5.2.6" evidence="1"/>
<dbReference type="EMBL" id="AF189299">
    <property type="protein sequence ID" value="AAF89155.1"/>
    <property type="molecule type" value="Genomic_DNA"/>
</dbReference>
<dbReference type="EMBL" id="AF189301">
    <property type="protein sequence ID" value="AAF89157.1"/>
    <property type="molecule type" value="Genomic_DNA"/>
</dbReference>
<dbReference type="SMR" id="Q9K303"/>
<dbReference type="GO" id="GO:0042597">
    <property type="term" value="C:periplasmic space"/>
    <property type="evidence" value="ECO:0007669"/>
    <property type="project" value="UniProtKB-SubCell"/>
</dbReference>
<dbReference type="GO" id="GO:0008800">
    <property type="term" value="F:beta-lactamase activity"/>
    <property type="evidence" value="ECO:0007669"/>
    <property type="project" value="UniProtKB-EC"/>
</dbReference>
<dbReference type="GO" id="GO:0008270">
    <property type="term" value="F:zinc ion binding"/>
    <property type="evidence" value="ECO:0007669"/>
    <property type="project" value="InterPro"/>
</dbReference>
<dbReference type="GO" id="GO:0017001">
    <property type="term" value="P:antibiotic catabolic process"/>
    <property type="evidence" value="ECO:0007669"/>
    <property type="project" value="InterPro"/>
</dbReference>
<dbReference type="GO" id="GO:0046677">
    <property type="term" value="P:response to antibiotic"/>
    <property type="evidence" value="ECO:0007669"/>
    <property type="project" value="UniProtKB-KW"/>
</dbReference>
<dbReference type="CDD" id="cd16316">
    <property type="entry name" value="BlaB-like_MBL-B1"/>
    <property type="match status" value="1"/>
</dbReference>
<dbReference type="FunFam" id="3.60.15.10:FF:000096">
    <property type="entry name" value="Metallo-beta-lactamase type 2"/>
    <property type="match status" value="1"/>
</dbReference>
<dbReference type="Gene3D" id="3.60.15.10">
    <property type="entry name" value="Ribonuclease Z/Hydroxyacylglutathione hydrolase-like"/>
    <property type="match status" value="1"/>
</dbReference>
<dbReference type="InterPro" id="IPR001018">
    <property type="entry name" value="Beta-lactamase_class-B_CS"/>
</dbReference>
<dbReference type="InterPro" id="IPR001279">
    <property type="entry name" value="Metallo-B-lactamas"/>
</dbReference>
<dbReference type="InterPro" id="IPR050855">
    <property type="entry name" value="NDM-1-like"/>
</dbReference>
<dbReference type="InterPro" id="IPR036866">
    <property type="entry name" value="RibonucZ/Hydroxyglut_hydro"/>
</dbReference>
<dbReference type="NCBIfam" id="NF012229">
    <property type="entry name" value="bla_class_B_core"/>
    <property type="match status" value="1"/>
</dbReference>
<dbReference type="NCBIfam" id="NF033088">
    <property type="entry name" value="bla_subclass_B1"/>
    <property type="match status" value="1"/>
</dbReference>
<dbReference type="NCBIfam" id="NF033107">
    <property type="entry name" value="blaB"/>
    <property type="match status" value="1"/>
</dbReference>
<dbReference type="NCBIfam" id="NF012146">
    <property type="entry name" value="blaB-IND-MUS"/>
    <property type="match status" value="1"/>
</dbReference>
<dbReference type="PANTHER" id="PTHR42951:SF4">
    <property type="entry name" value="ACYL-COENZYME A THIOESTERASE MBLAC2"/>
    <property type="match status" value="1"/>
</dbReference>
<dbReference type="PANTHER" id="PTHR42951">
    <property type="entry name" value="METALLO-BETA-LACTAMASE DOMAIN-CONTAINING"/>
    <property type="match status" value="1"/>
</dbReference>
<dbReference type="Pfam" id="PF00753">
    <property type="entry name" value="Lactamase_B"/>
    <property type="match status" value="1"/>
</dbReference>
<dbReference type="SMART" id="SM00849">
    <property type="entry name" value="Lactamase_B"/>
    <property type="match status" value="1"/>
</dbReference>
<dbReference type="SUPFAM" id="SSF56281">
    <property type="entry name" value="Metallo-hydrolase/oxidoreductase"/>
    <property type="match status" value="1"/>
</dbReference>
<dbReference type="PROSITE" id="PS00743">
    <property type="entry name" value="BETA_LACTAMASE_B_1"/>
    <property type="match status" value="1"/>
</dbReference>
<dbReference type="PROSITE" id="PS00744">
    <property type="entry name" value="BETA_LACTAMASE_B_2"/>
    <property type="match status" value="1"/>
</dbReference>
<keyword id="KW-0046">Antibiotic resistance</keyword>
<keyword id="KW-0378">Hydrolase</keyword>
<keyword id="KW-0479">Metal-binding</keyword>
<keyword id="KW-0574">Periplasm</keyword>
<keyword id="KW-0732">Signal</keyword>
<keyword id="KW-0862">Zinc</keyword>